<name>CYNS_CUPNH</name>
<organism>
    <name type="scientific">Cupriavidus necator (strain ATCC 17699 / DSM 428 / KCTC 22496 / NCIMB 10442 / H16 / Stanier 337)</name>
    <name type="common">Ralstonia eutropha</name>
    <dbReference type="NCBI Taxonomy" id="381666"/>
    <lineage>
        <taxon>Bacteria</taxon>
        <taxon>Pseudomonadati</taxon>
        <taxon>Pseudomonadota</taxon>
        <taxon>Betaproteobacteria</taxon>
        <taxon>Burkholderiales</taxon>
        <taxon>Burkholderiaceae</taxon>
        <taxon>Cupriavidus</taxon>
    </lineage>
</organism>
<protein>
    <recommendedName>
        <fullName evidence="1">Cyanate hydratase</fullName>
        <shortName evidence="1">Cyanase</shortName>
        <ecNumber evidence="1">4.2.1.104</ecNumber>
    </recommendedName>
    <alternativeName>
        <fullName evidence="1">Cyanate hydrolase</fullName>
    </alternativeName>
    <alternativeName>
        <fullName evidence="1">Cyanate lyase</fullName>
    </alternativeName>
</protein>
<proteinExistence type="inferred from homology"/>
<accession>Q0K572</accession>
<comment type="function">
    <text evidence="1">Catalyzes the reaction of cyanate with bicarbonate to produce ammonia and carbon dioxide.</text>
</comment>
<comment type="catalytic activity">
    <reaction evidence="1">
        <text>cyanate + hydrogencarbonate + 3 H(+) = NH4(+) + 2 CO2</text>
        <dbReference type="Rhea" id="RHEA:11120"/>
        <dbReference type="ChEBI" id="CHEBI:15378"/>
        <dbReference type="ChEBI" id="CHEBI:16526"/>
        <dbReference type="ChEBI" id="CHEBI:17544"/>
        <dbReference type="ChEBI" id="CHEBI:28938"/>
        <dbReference type="ChEBI" id="CHEBI:29195"/>
        <dbReference type="EC" id="4.2.1.104"/>
    </reaction>
</comment>
<comment type="similarity">
    <text evidence="1">Belongs to the cyanase family.</text>
</comment>
<gene>
    <name evidence="1" type="primary">cynS</name>
    <name type="ordered locus">H16_B0046</name>
</gene>
<sequence>MNRSDVTDLIIEAKVTRGIAWAQVAERVGRSKEWTTAACLGQMAFDAAGARAVMELFGLPPEAEPWLREVPYKGSLPTQVPADPLIYRFYELISVYGTTFKALIHEEFGDGIMSAIDFRMDLQREPDPNGDRVRIEMSGKFLPYKTY</sequence>
<dbReference type="EC" id="4.2.1.104" evidence="1"/>
<dbReference type="EMBL" id="AM260480">
    <property type="protein sequence ID" value="CAJ94852.1"/>
    <property type="molecule type" value="Genomic_DNA"/>
</dbReference>
<dbReference type="RefSeq" id="WP_010811104.1">
    <property type="nucleotide sequence ID" value="NZ_CP039288.1"/>
</dbReference>
<dbReference type="SMR" id="Q0K572"/>
<dbReference type="STRING" id="381666.H16_B0046"/>
<dbReference type="KEGG" id="reh:H16_B0046"/>
<dbReference type="eggNOG" id="COG1513">
    <property type="taxonomic scope" value="Bacteria"/>
</dbReference>
<dbReference type="HOGENOM" id="CLU_103452_1_0_4"/>
<dbReference type="OrthoDB" id="9785870at2"/>
<dbReference type="Proteomes" id="UP000008210">
    <property type="component" value="Chromosome 2"/>
</dbReference>
<dbReference type="GO" id="GO:0008824">
    <property type="term" value="F:cyanate hydratase activity"/>
    <property type="evidence" value="ECO:0007669"/>
    <property type="project" value="UniProtKB-UniRule"/>
</dbReference>
<dbReference type="GO" id="GO:0003677">
    <property type="term" value="F:DNA binding"/>
    <property type="evidence" value="ECO:0007669"/>
    <property type="project" value="InterPro"/>
</dbReference>
<dbReference type="GO" id="GO:0009439">
    <property type="term" value="P:cyanate metabolic process"/>
    <property type="evidence" value="ECO:0007669"/>
    <property type="project" value="UniProtKB-UniRule"/>
</dbReference>
<dbReference type="CDD" id="cd00559">
    <property type="entry name" value="Cyanase_C"/>
    <property type="match status" value="1"/>
</dbReference>
<dbReference type="Gene3D" id="3.30.1160.10">
    <property type="entry name" value="Cyanate lyase, C-terminal domain"/>
    <property type="match status" value="1"/>
</dbReference>
<dbReference type="Gene3D" id="1.10.260.40">
    <property type="entry name" value="lambda repressor-like DNA-binding domains"/>
    <property type="match status" value="1"/>
</dbReference>
<dbReference type="HAMAP" id="MF_00535">
    <property type="entry name" value="Cyanate_hydrat"/>
    <property type="match status" value="1"/>
</dbReference>
<dbReference type="InterPro" id="IPR008076">
    <property type="entry name" value="Cyanase"/>
</dbReference>
<dbReference type="InterPro" id="IPR003712">
    <property type="entry name" value="Cyanate_lyase_C"/>
</dbReference>
<dbReference type="InterPro" id="IPR036581">
    <property type="entry name" value="Cyanate_lyase_C_sf"/>
</dbReference>
<dbReference type="InterPro" id="IPR048564">
    <property type="entry name" value="CYNS_N"/>
</dbReference>
<dbReference type="InterPro" id="IPR010982">
    <property type="entry name" value="Lambda_DNA-bd_dom_sf"/>
</dbReference>
<dbReference type="NCBIfam" id="TIGR00673">
    <property type="entry name" value="cynS"/>
    <property type="match status" value="1"/>
</dbReference>
<dbReference type="NCBIfam" id="NF002773">
    <property type="entry name" value="PRK02866.1"/>
    <property type="match status" value="1"/>
</dbReference>
<dbReference type="PANTHER" id="PTHR34186">
    <property type="entry name" value="CYANATE HYDRATASE"/>
    <property type="match status" value="1"/>
</dbReference>
<dbReference type="PANTHER" id="PTHR34186:SF2">
    <property type="entry name" value="CYANATE HYDRATASE"/>
    <property type="match status" value="1"/>
</dbReference>
<dbReference type="Pfam" id="PF02560">
    <property type="entry name" value="Cyanate_lyase"/>
    <property type="match status" value="1"/>
</dbReference>
<dbReference type="Pfam" id="PF21291">
    <property type="entry name" value="CYNS_N"/>
    <property type="match status" value="1"/>
</dbReference>
<dbReference type="PIRSF" id="PIRSF001263">
    <property type="entry name" value="Cyanate_hydratas"/>
    <property type="match status" value="1"/>
</dbReference>
<dbReference type="PRINTS" id="PR01693">
    <property type="entry name" value="CYANASE"/>
</dbReference>
<dbReference type="SMART" id="SM01116">
    <property type="entry name" value="Cyanate_lyase"/>
    <property type="match status" value="1"/>
</dbReference>
<dbReference type="SUPFAM" id="SSF55234">
    <property type="entry name" value="Cyanase C-terminal domain"/>
    <property type="match status" value="1"/>
</dbReference>
<dbReference type="SUPFAM" id="SSF47413">
    <property type="entry name" value="lambda repressor-like DNA-binding domains"/>
    <property type="match status" value="1"/>
</dbReference>
<feature type="chain" id="PRO_1000072537" description="Cyanate hydratase">
    <location>
        <begin position="1"/>
        <end position="147"/>
    </location>
</feature>
<feature type="active site" evidence="1">
    <location>
        <position position="88"/>
    </location>
</feature>
<feature type="active site" evidence="1">
    <location>
        <position position="91"/>
    </location>
</feature>
<feature type="active site" evidence="1">
    <location>
        <position position="114"/>
    </location>
</feature>
<evidence type="ECO:0000255" key="1">
    <source>
        <dbReference type="HAMAP-Rule" id="MF_00535"/>
    </source>
</evidence>
<reference key="1">
    <citation type="journal article" date="2006" name="Nat. Biotechnol.">
        <title>Genome sequence of the bioplastic-producing 'Knallgas' bacterium Ralstonia eutropha H16.</title>
        <authorList>
            <person name="Pohlmann A."/>
            <person name="Fricke W.F."/>
            <person name="Reinecke F."/>
            <person name="Kusian B."/>
            <person name="Liesegang H."/>
            <person name="Cramm R."/>
            <person name="Eitinger T."/>
            <person name="Ewering C."/>
            <person name="Poetter M."/>
            <person name="Schwartz E."/>
            <person name="Strittmatter A."/>
            <person name="Voss I."/>
            <person name="Gottschalk G."/>
            <person name="Steinbuechel A."/>
            <person name="Friedrich B."/>
            <person name="Bowien B."/>
        </authorList>
    </citation>
    <scope>NUCLEOTIDE SEQUENCE [LARGE SCALE GENOMIC DNA]</scope>
    <source>
        <strain>ATCC 17699 / DSM 428 / KCTC 22496 / NCIMB 10442 / H16 / Stanier 337</strain>
    </source>
</reference>
<keyword id="KW-0456">Lyase</keyword>
<keyword id="KW-1185">Reference proteome</keyword>